<protein>
    <recommendedName>
        <fullName>Uncharacterized protein YuxK</fullName>
    </recommendedName>
    <alternativeName>
        <fullName>ORF2</fullName>
    </alternativeName>
</protein>
<evidence type="ECO:0000305" key="1"/>
<sequence>MTSEQIPNRVLLFDGVCNLCNGAVQFIIKRDPDGLISFTSLQSETGQSLLKKSGLPTDRFDSFVFIEDGQVYTKSTAAIKVFRHLRGPWRLFVLFFAVPKPVRDMVYSFIAKNRYKWFGKKNECMLPSPSIKKRFLP</sequence>
<dbReference type="EMBL" id="U11882">
    <property type="protein sequence ID" value="AAA64944.1"/>
    <property type="molecule type" value="Genomic_DNA"/>
</dbReference>
<dbReference type="EMBL" id="Z93933">
    <property type="protein sequence ID" value="CAB07916.1"/>
    <property type="molecule type" value="Genomic_DNA"/>
</dbReference>
<dbReference type="EMBL" id="AL009126">
    <property type="protein sequence ID" value="CAB15139.1"/>
    <property type="molecule type" value="Genomic_DNA"/>
</dbReference>
<dbReference type="PIR" id="B55220">
    <property type="entry name" value="B55220"/>
</dbReference>
<dbReference type="RefSeq" id="NP_391028.1">
    <property type="nucleotide sequence ID" value="NC_000964.3"/>
</dbReference>
<dbReference type="RefSeq" id="WP_003228839.1">
    <property type="nucleotide sequence ID" value="NZ_OZ025638.1"/>
</dbReference>
<dbReference type="SMR" id="P40761"/>
<dbReference type="FunCoup" id="P40761">
    <property type="interactions" value="39"/>
</dbReference>
<dbReference type="STRING" id="224308.BSU31500"/>
<dbReference type="PaxDb" id="224308-BSU31500"/>
<dbReference type="EnsemblBacteria" id="CAB15139">
    <property type="protein sequence ID" value="CAB15139"/>
    <property type="gene ID" value="BSU_31500"/>
</dbReference>
<dbReference type="GeneID" id="938854"/>
<dbReference type="KEGG" id="bsu:BSU31500"/>
<dbReference type="PATRIC" id="fig|224308.179.peg.3415"/>
<dbReference type="eggNOG" id="COG3011">
    <property type="taxonomic scope" value="Bacteria"/>
</dbReference>
<dbReference type="InParanoid" id="P40761"/>
<dbReference type="OrthoDB" id="9785438at2"/>
<dbReference type="PhylomeDB" id="P40761"/>
<dbReference type="BioCyc" id="BSUB:BSU31500-MONOMER"/>
<dbReference type="Proteomes" id="UP000001570">
    <property type="component" value="Chromosome"/>
</dbReference>
<dbReference type="GO" id="GO:0015035">
    <property type="term" value="F:protein-disulfide reductase activity"/>
    <property type="evidence" value="ECO:0007669"/>
    <property type="project" value="InterPro"/>
</dbReference>
<dbReference type="InterPro" id="IPR007263">
    <property type="entry name" value="DCC1-like"/>
</dbReference>
<dbReference type="InterPro" id="IPR052927">
    <property type="entry name" value="DCC_oxidoreductase"/>
</dbReference>
<dbReference type="PANTHER" id="PTHR33639:SF2">
    <property type="entry name" value="DUF393 DOMAIN-CONTAINING PROTEIN"/>
    <property type="match status" value="1"/>
</dbReference>
<dbReference type="PANTHER" id="PTHR33639">
    <property type="entry name" value="THIOL-DISULFIDE OXIDOREDUCTASE DCC"/>
    <property type="match status" value="1"/>
</dbReference>
<dbReference type="Pfam" id="PF04134">
    <property type="entry name" value="DCC1-like"/>
    <property type="match status" value="1"/>
</dbReference>
<organism>
    <name type="scientific">Bacillus subtilis (strain 168)</name>
    <dbReference type="NCBI Taxonomy" id="224308"/>
    <lineage>
        <taxon>Bacteria</taxon>
        <taxon>Bacillati</taxon>
        <taxon>Bacillota</taxon>
        <taxon>Bacilli</taxon>
        <taxon>Bacillales</taxon>
        <taxon>Bacillaceae</taxon>
        <taxon>Bacillus</taxon>
    </lineage>
</organism>
<comment type="similarity">
    <text evidence="1">Belongs to the DCC thiol-disulfide oxidoreductase family.</text>
</comment>
<proteinExistence type="inferred from homology"/>
<accession>P40761</accession>
<accession>O05233</accession>
<keyword id="KW-1185">Reference proteome</keyword>
<reference key="1">
    <citation type="journal article" date="1994" name="J. Bacteriol.">
        <title>Cloning, nucleotide sequence, mutagenesis, and mapping of the Bacillus subtilis pbpD gene, which codes for penicillin-binding protein 4.</title>
        <authorList>
            <person name="Popham D.L."/>
            <person name="Setlow P."/>
        </authorList>
    </citation>
    <scope>NUCLEOTIDE SEQUENCE [GENOMIC DNA]</scope>
    <source>
        <strain>168</strain>
    </source>
</reference>
<reference key="2">
    <citation type="journal article" date="1997" name="Microbiology">
        <title>Analysis of the Bacillus subtilis genome: cloning and nucleotide sequence of a 62 kb region between 275 degrees (rrnB) and 284 degrees (pai).</title>
        <authorList>
            <person name="Oudega B."/>
            <person name="Koningstein G."/>
            <person name="Rodrigues L."/>
            <person name="de Sales Ramon M."/>
            <person name="Hilbert H."/>
            <person name="Duesterhoeft A."/>
            <person name="Pohl T.M."/>
            <person name="Weitzenegger T."/>
        </authorList>
    </citation>
    <scope>NUCLEOTIDE SEQUENCE [GENOMIC DNA]</scope>
    <source>
        <strain>168</strain>
    </source>
</reference>
<reference key="3">
    <citation type="journal article" date="1997" name="Nature">
        <title>The complete genome sequence of the Gram-positive bacterium Bacillus subtilis.</title>
        <authorList>
            <person name="Kunst F."/>
            <person name="Ogasawara N."/>
            <person name="Moszer I."/>
            <person name="Albertini A.M."/>
            <person name="Alloni G."/>
            <person name="Azevedo V."/>
            <person name="Bertero M.G."/>
            <person name="Bessieres P."/>
            <person name="Bolotin A."/>
            <person name="Borchert S."/>
            <person name="Borriss R."/>
            <person name="Boursier L."/>
            <person name="Brans A."/>
            <person name="Braun M."/>
            <person name="Brignell S.C."/>
            <person name="Bron S."/>
            <person name="Brouillet S."/>
            <person name="Bruschi C.V."/>
            <person name="Caldwell B."/>
            <person name="Capuano V."/>
            <person name="Carter N.M."/>
            <person name="Choi S.-K."/>
            <person name="Codani J.-J."/>
            <person name="Connerton I.F."/>
            <person name="Cummings N.J."/>
            <person name="Daniel R.A."/>
            <person name="Denizot F."/>
            <person name="Devine K.M."/>
            <person name="Duesterhoeft A."/>
            <person name="Ehrlich S.D."/>
            <person name="Emmerson P.T."/>
            <person name="Entian K.-D."/>
            <person name="Errington J."/>
            <person name="Fabret C."/>
            <person name="Ferrari E."/>
            <person name="Foulger D."/>
            <person name="Fritz C."/>
            <person name="Fujita M."/>
            <person name="Fujita Y."/>
            <person name="Fuma S."/>
            <person name="Galizzi A."/>
            <person name="Galleron N."/>
            <person name="Ghim S.-Y."/>
            <person name="Glaser P."/>
            <person name="Goffeau A."/>
            <person name="Golightly E.J."/>
            <person name="Grandi G."/>
            <person name="Guiseppi G."/>
            <person name="Guy B.J."/>
            <person name="Haga K."/>
            <person name="Haiech J."/>
            <person name="Harwood C.R."/>
            <person name="Henaut A."/>
            <person name="Hilbert H."/>
            <person name="Holsappel S."/>
            <person name="Hosono S."/>
            <person name="Hullo M.-F."/>
            <person name="Itaya M."/>
            <person name="Jones L.-M."/>
            <person name="Joris B."/>
            <person name="Karamata D."/>
            <person name="Kasahara Y."/>
            <person name="Klaerr-Blanchard M."/>
            <person name="Klein C."/>
            <person name="Kobayashi Y."/>
            <person name="Koetter P."/>
            <person name="Koningstein G."/>
            <person name="Krogh S."/>
            <person name="Kumano M."/>
            <person name="Kurita K."/>
            <person name="Lapidus A."/>
            <person name="Lardinois S."/>
            <person name="Lauber J."/>
            <person name="Lazarevic V."/>
            <person name="Lee S.-M."/>
            <person name="Levine A."/>
            <person name="Liu H."/>
            <person name="Masuda S."/>
            <person name="Mauel C."/>
            <person name="Medigue C."/>
            <person name="Medina N."/>
            <person name="Mellado R.P."/>
            <person name="Mizuno M."/>
            <person name="Moestl D."/>
            <person name="Nakai S."/>
            <person name="Noback M."/>
            <person name="Noone D."/>
            <person name="O'Reilly M."/>
            <person name="Ogawa K."/>
            <person name="Ogiwara A."/>
            <person name="Oudega B."/>
            <person name="Park S.-H."/>
            <person name="Parro V."/>
            <person name="Pohl T.M."/>
            <person name="Portetelle D."/>
            <person name="Porwollik S."/>
            <person name="Prescott A.M."/>
            <person name="Presecan E."/>
            <person name="Pujic P."/>
            <person name="Purnelle B."/>
            <person name="Rapoport G."/>
            <person name="Rey M."/>
            <person name="Reynolds S."/>
            <person name="Rieger M."/>
            <person name="Rivolta C."/>
            <person name="Rocha E."/>
            <person name="Roche B."/>
            <person name="Rose M."/>
            <person name="Sadaie Y."/>
            <person name="Sato T."/>
            <person name="Scanlan E."/>
            <person name="Schleich S."/>
            <person name="Schroeter R."/>
            <person name="Scoffone F."/>
            <person name="Sekiguchi J."/>
            <person name="Sekowska A."/>
            <person name="Seror S.J."/>
            <person name="Serror P."/>
            <person name="Shin B.-S."/>
            <person name="Soldo B."/>
            <person name="Sorokin A."/>
            <person name="Tacconi E."/>
            <person name="Takagi T."/>
            <person name="Takahashi H."/>
            <person name="Takemaru K."/>
            <person name="Takeuchi M."/>
            <person name="Tamakoshi A."/>
            <person name="Tanaka T."/>
            <person name="Terpstra P."/>
            <person name="Tognoni A."/>
            <person name="Tosato V."/>
            <person name="Uchiyama S."/>
            <person name="Vandenbol M."/>
            <person name="Vannier F."/>
            <person name="Vassarotti A."/>
            <person name="Viari A."/>
            <person name="Wambutt R."/>
            <person name="Wedler E."/>
            <person name="Wedler H."/>
            <person name="Weitzenegger T."/>
            <person name="Winters P."/>
            <person name="Wipat A."/>
            <person name="Yamamoto H."/>
            <person name="Yamane K."/>
            <person name="Yasumoto K."/>
            <person name="Yata K."/>
            <person name="Yoshida K."/>
            <person name="Yoshikawa H.-F."/>
            <person name="Zumstein E."/>
            <person name="Yoshikawa H."/>
            <person name="Danchin A."/>
        </authorList>
    </citation>
    <scope>NUCLEOTIDE SEQUENCE [LARGE SCALE GENOMIC DNA]</scope>
    <source>
        <strain>168</strain>
    </source>
</reference>
<gene>
    <name type="primary">yuxK</name>
    <name type="synonym">yugD</name>
    <name type="ordered locus">BSU31500</name>
</gene>
<feature type="chain" id="PRO_0000049929" description="Uncharacterized protein YuxK">
    <location>
        <begin position="1"/>
        <end position="137"/>
    </location>
</feature>
<name>YUXK_BACSU</name>